<reference key="1">
    <citation type="journal article" date="1994" name="Eur. J. Biochem.">
        <title>Characterisation and amino acid sequence of cytochrome c-550 from Thiosphaera pantotropha.</title>
        <authorList>
            <person name="Samyn B."/>
            <person name="Berks B.C."/>
            <person name="Page M.L.D."/>
            <person name="Ferguson S.J."/>
            <person name="van Beeumen J.J."/>
        </authorList>
    </citation>
    <scope>PROTEIN SEQUENCE</scope>
    <scope>PYROGLUTAMATE FORMATION AT GLN-1</scope>
    <source>
        <strain>ATCC 35512 / DSM 2944 / CIP 106514 / LMD 82.5 / NBRC 102493 / NCCB 82005 / GB17</strain>
    </source>
</reference>
<feature type="chain" id="PRO_0000108386" description="Cytochrome c-550">
    <location>
        <begin position="1"/>
        <end position="134"/>
    </location>
</feature>
<feature type="binding site" description="covalent">
    <location>
        <position position="15"/>
    </location>
    <ligand>
        <name>heme c</name>
        <dbReference type="ChEBI" id="CHEBI:61717"/>
    </ligand>
</feature>
<feature type="binding site" description="covalent">
    <location>
        <position position="18"/>
    </location>
    <ligand>
        <name>heme c</name>
        <dbReference type="ChEBI" id="CHEBI:61717"/>
    </ligand>
</feature>
<feature type="binding site" description="axial binding residue" evidence="1">
    <location>
        <position position="19"/>
    </location>
    <ligand>
        <name>heme c</name>
        <dbReference type="ChEBI" id="CHEBI:61717"/>
    </ligand>
    <ligandPart>
        <name>Fe</name>
        <dbReference type="ChEBI" id="CHEBI:18248"/>
    </ligandPart>
</feature>
<feature type="binding site" description="axial binding residue" evidence="1">
    <location>
        <position position="100"/>
    </location>
    <ligand>
        <name>heme c</name>
        <dbReference type="ChEBI" id="CHEBI:61717"/>
    </ligand>
    <ligandPart>
        <name>Fe</name>
        <dbReference type="ChEBI" id="CHEBI:18248"/>
    </ligandPart>
</feature>
<feature type="modified residue" description="Pyrrolidone carboxylic acid" evidence="2">
    <location>
        <position position="1"/>
    </location>
</feature>
<protein>
    <recommendedName>
        <fullName>Cytochrome c-550</fullName>
    </recommendedName>
    <alternativeName>
        <fullName>Cytochrome c550</fullName>
    </alternativeName>
</protein>
<organism>
    <name type="scientific">Paracoccus pantotrophus</name>
    <name type="common">Thiosphaera pantotropha</name>
    <dbReference type="NCBI Taxonomy" id="82367"/>
    <lineage>
        <taxon>Bacteria</taxon>
        <taxon>Pseudomonadati</taxon>
        <taxon>Pseudomonadota</taxon>
        <taxon>Alphaproteobacteria</taxon>
        <taxon>Rhodobacterales</taxon>
        <taxon>Paracoccaceae</taxon>
        <taxon>Paracoccus</taxon>
    </lineage>
</organism>
<proteinExistence type="evidence at protein level"/>
<name>CY550_PARPN</name>
<sequence length="134" mass="14201">QEGDAAKGEKEFNKCKACHMVQAPDGTDIVKGGKTGPNLYGVVGRKIASEEGFKYGDGILEVAEKNPDLVWTEADLIEYVTDPKPWLVEKTGDSAAKTKMTFKLGKNQADVVAFLAQNSPDAGAEAAPAEDAAD</sequence>
<dbReference type="PIR" id="S41108">
    <property type="entry name" value="S41108"/>
</dbReference>
<dbReference type="SMR" id="P80288"/>
<dbReference type="STRING" id="82367.SAMN04244567_02502"/>
<dbReference type="eggNOG" id="COG3474">
    <property type="taxonomic scope" value="Bacteria"/>
</dbReference>
<dbReference type="GO" id="GO:0009055">
    <property type="term" value="F:electron transfer activity"/>
    <property type="evidence" value="ECO:0007669"/>
    <property type="project" value="InterPro"/>
</dbReference>
<dbReference type="GO" id="GO:0020037">
    <property type="term" value="F:heme binding"/>
    <property type="evidence" value="ECO:0007669"/>
    <property type="project" value="InterPro"/>
</dbReference>
<dbReference type="GO" id="GO:0046872">
    <property type="term" value="F:metal ion binding"/>
    <property type="evidence" value="ECO:0007669"/>
    <property type="project" value="UniProtKB-KW"/>
</dbReference>
<dbReference type="Gene3D" id="1.10.760.10">
    <property type="entry name" value="Cytochrome c-like domain"/>
    <property type="match status" value="1"/>
</dbReference>
<dbReference type="InterPro" id="IPR009056">
    <property type="entry name" value="Cyt_c-like_dom"/>
</dbReference>
<dbReference type="InterPro" id="IPR036909">
    <property type="entry name" value="Cyt_c-like_dom_sf"/>
</dbReference>
<dbReference type="InterPro" id="IPR002327">
    <property type="entry name" value="Cyt_c_1A/1B"/>
</dbReference>
<dbReference type="PANTHER" id="PTHR11961">
    <property type="entry name" value="CYTOCHROME C"/>
    <property type="match status" value="1"/>
</dbReference>
<dbReference type="SUPFAM" id="SSF46626">
    <property type="entry name" value="Cytochrome c"/>
    <property type="match status" value="1"/>
</dbReference>
<dbReference type="PROSITE" id="PS51007">
    <property type="entry name" value="CYTC"/>
    <property type="match status" value="1"/>
</dbReference>
<keyword id="KW-0903">Direct protein sequencing</keyword>
<keyword id="KW-0249">Electron transport</keyword>
<keyword id="KW-0349">Heme</keyword>
<keyword id="KW-0408">Iron</keyword>
<keyword id="KW-0479">Metal-binding</keyword>
<keyword id="KW-0873">Pyrrolidone carboxylic acid</keyword>
<keyword id="KW-0813">Transport</keyword>
<evidence type="ECO:0000255" key="1">
    <source>
        <dbReference type="PROSITE-ProRule" id="PRU00433"/>
    </source>
</evidence>
<evidence type="ECO:0000269" key="2">
    <source>
    </source>
</evidence>
<comment type="function">
    <text>Electron donor for nitrous-oxide reductase.</text>
</comment>
<comment type="biophysicochemical properties">
    <redoxPotential>
        <text>E(0) is about +265 mV.</text>
    </redoxPotential>
</comment>
<comment type="PTM">
    <text>Binds 1 heme c group covalently per subunit.</text>
</comment>
<accession>P80288</accession>